<dbReference type="EMBL" id="AE004437">
    <property type="status" value="NOT_ANNOTATED_CDS"/>
    <property type="molecule type" value="Genomic_DNA"/>
</dbReference>
<dbReference type="RefSeq" id="WP_010903950.1">
    <property type="nucleotide sequence ID" value="NC_002607.1"/>
</dbReference>
<dbReference type="SMR" id="P58015"/>
<dbReference type="InParanoid" id="P58015"/>
<dbReference type="OrthoDB" id="59816at2157"/>
<dbReference type="Proteomes" id="UP000000554">
    <property type="component" value="Chromosome"/>
</dbReference>
<dbReference type="Gene3D" id="3.40.50.150">
    <property type="entry name" value="Vaccinia Virus protein VP39"/>
    <property type="match status" value="1"/>
</dbReference>
<dbReference type="HAMAP" id="MF_00341">
    <property type="entry name" value="UPF0146"/>
    <property type="match status" value="1"/>
</dbReference>
<dbReference type="InterPro" id="IPR029063">
    <property type="entry name" value="SAM-dependent_MTases_sf"/>
</dbReference>
<dbReference type="InterPro" id="IPR005353">
    <property type="entry name" value="UPF0146"/>
</dbReference>
<dbReference type="Pfam" id="PF03686">
    <property type="entry name" value="UPF0146"/>
    <property type="match status" value="1"/>
</dbReference>
<dbReference type="PIRSF" id="PIRSF016725">
    <property type="entry name" value="UCP016725"/>
    <property type="match status" value="1"/>
</dbReference>
<dbReference type="SUPFAM" id="SSF53335">
    <property type="entry name" value="S-adenosyl-L-methionine-dependent methyltransferases"/>
    <property type="match status" value="1"/>
</dbReference>
<evidence type="ECO:0000305" key="1"/>
<accession>P58015</accession>
<keyword id="KW-1185">Reference proteome</keyword>
<reference key="1">
    <citation type="journal article" date="2000" name="Proc. Natl. Acad. Sci. U.S.A.">
        <title>Genome sequence of Halobacterium species NRC-1.</title>
        <authorList>
            <person name="Ng W.V."/>
            <person name="Kennedy S.P."/>
            <person name="Mahairas G.G."/>
            <person name="Berquist B."/>
            <person name="Pan M."/>
            <person name="Shukla H.D."/>
            <person name="Lasky S.R."/>
            <person name="Baliga N.S."/>
            <person name="Thorsson V."/>
            <person name="Sbrogna J."/>
            <person name="Swartzell S."/>
            <person name="Weir D."/>
            <person name="Hall J."/>
            <person name="Dahl T.A."/>
            <person name="Welti R."/>
            <person name="Goo Y.A."/>
            <person name="Leithauser B."/>
            <person name="Keller K."/>
            <person name="Cruz R."/>
            <person name="Danson M.J."/>
            <person name="Hough D.W."/>
            <person name="Maddocks D.G."/>
            <person name="Jablonski P.E."/>
            <person name="Krebs M.P."/>
            <person name="Angevine C.M."/>
            <person name="Dale H."/>
            <person name="Isenbarger T.A."/>
            <person name="Peck R.F."/>
            <person name="Pohlschroder M."/>
            <person name="Spudich J.L."/>
            <person name="Jung K.-H."/>
            <person name="Alam M."/>
            <person name="Freitas T."/>
            <person name="Hou S."/>
            <person name="Daniels C.J."/>
            <person name="Dennis P.P."/>
            <person name="Omer A.D."/>
            <person name="Ebhardt H."/>
            <person name="Lowe T.M."/>
            <person name="Liang P."/>
            <person name="Riley M."/>
            <person name="Hood L."/>
            <person name="DasSarma S."/>
        </authorList>
    </citation>
    <scope>NUCLEOTIDE SEQUENCE [LARGE SCALE GENOMIC DNA]</scope>
    <source>
        <strain>ATCC 700922 / JCM 11081 / NRC-1</strain>
    </source>
</reference>
<reference key="2">
    <citation type="unpublished observations" date="2001-04">
        <authorList>
            <person name="Bairoch A."/>
        </authorList>
    </citation>
    <scope>IDENTIFICATION</scope>
</reference>
<feature type="chain" id="PRO_0000145093" description="UPF0146 protein VNG_2609C">
    <location>
        <begin position="1"/>
        <end position="129"/>
    </location>
</feature>
<protein>
    <recommendedName>
        <fullName>UPF0146 protein VNG_2609C</fullName>
    </recommendedName>
</protein>
<organism>
    <name type="scientific">Halobacterium salinarum (strain ATCC 700922 / JCM 11081 / NRC-1)</name>
    <name type="common">Halobacterium halobium</name>
    <dbReference type="NCBI Taxonomy" id="64091"/>
    <lineage>
        <taxon>Archaea</taxon>
        <taxon>Methanobacteriati</taxon>
        <taxon>Methanobacteriota</taxon>
        <taxon>Stenosarchaea group</taxon>
        <taxon>Halobacteria</taxon>
        <taxon>Halobacteriales</taxon>
        <taxon>Halobacteriaceae</taxon>
        <taxon>Halobacterium</taxon>
        <taxon>Halobacterium salinarum NRC-34001</taxon>
    </lineage>
</organism>
<proteinExistence type="inferred from homology"/>
<name>Y2609_HALSA</name>
<gene>
    <name type="ordered locus">VNG_2609C</name>
</gene>
<sequence>MTQPPTVAAVLAAHSRVVEVGIGARPDVAAALAERGCAVTATDIEACTVPETVRFVRDDVTDPERAVYEAADAVYALRCPPELQRAVVDVAGAVGAACYLTTLGGEPVVVPVSERRTVASGALFVARDA</sequence>
<comment type="similarity">
    <text evidence="1">Belongs to the UPF0146 family.</text>
</comment>